<reference key="1">
    <citation type="journal article" date="1996" name="J. Virol.">
        <title>Determination and analysis of the complete nucleotide sequence of human herpesvirus.</title>
        <authorList>
            <person name="Nicholas J."/>
        </authorList>
    </citation>
    <scope>NUCLEOTIDE SEQUENCE [LARGE SCALE GENOMIC DNA]</scope>
</reference>
<comment type="function">
    <text evidence="1">Capsid vertex-specific component that plays a role during viral DNA encapsidation, assuring correct genome cleavage and presumably stabilizing capsids that contain full-length viral genomes. Participates in the interaction between the capsid and the tegument through interaction with the large tegument protein/LTP.</text>
</comment>
<comment type="subunit">
    <text evidence="1">Heterodimerizes with CVC1. Interacts with major capsid protein/MCP and triplex capsid protein 1/TRX1 at the pentamer vertices. Interacts with the large tegument protein/LTP.</text>
</comment>
<comment type="subcellular location">
    <subcellularLocation>
        <location evidence="1">Virion</location>
    </subcellularLocation>
    <subcellularLocation>
        <location evidence="1">Host nucleus</location>
    </subcellularLocation>
</comment>
<comment type="similarity">
    <text evidence="1">Belongs to the herpesviridae CVC2 protein family.</text>
</comment>
<organism>
    <name type="scientific">Human herpesvirus 7 (strain JI)</name>
    <name type="common">HHV-7</name>
    <name type="synonym">Human T lymphotropic virus</name>
    <dbReference type="NCBI Taxonomy" id="57278"/>
    <lineage>
        <taxon>Viruses</taxon>
        <taxon>Duplodnaviria</taxon>
        <taxon>Heunggongvirae</taxon>
        <taxon>Peploviricota</taxon>
        <taxon>Herviviricetes</taxon>
        <taxon>Herpesvirales</taxon>
        <taxon>Orthoherpesviridae</taxon>
        <taxon>Betaherpesvirinae</taxon>
        <taxon>Roseolovirus</taxon>
        <taxon>Roseolovirus humanbeta7</taxon>
        <taxon>Human betaherpesvirus 7</taxon>
    </lineage>
</organism>
<accession>P52388</accession>
<dbReference type="EMBL" id="U43400">
    <property type="protein sequence ID" value="AAC54712.1"/>
    <property type="molecule type" value="Genomic_DNA"/>
</dbReference>
<dbReference type="PIR" id="T41952">
    <property type="entry name" value="T41952"/>
</dbReference>
<dbReference type="SMR" id="P52388"/>
<dbReference type="Proteomes" id="UP000009246">
    <property type="component" value="Segment"/>
</dbReference>
<dbReference type="GO" id="GO:0043657">
    <property type="term" value="C:host cell"/>
    <property type="evidence" value="ECO:0007669"/>
    <property type="project" value="GOC"/>
</dbReference>
<dbReference type="GO" id="GO:0042025">
    <property type="term" value="C:host cell nucleus"/>
    <property type="evidence" value="ECO:0007669"/>
    <property type="project" value="UniProtKB-SubCell"/>
</dbReference>
<dbReference type="GO" id="GO:0019028">
    <property type="term" value="C:viral capsid"/>
    <property type="evidence" value="ECO:0007669"/>
    <property type="project" value="UniProtKB-KW"/>
</dbReference>
<dbReference type="GO" id="GO:0046718">
    <property type="term" value="P:symbiont entry into host cell"/>
    <property type="evidence" value="ECO:0007669"/>
    <property type="project" value="UniProtKB-KW"/>
</dbReference>
<dbReference type="GO" id="GO:0019072">
    <property type="term" value="P:viral genome packaging"/>
    <property type="evidence" value="ECO:0007669"/>
    <property type="project" value="InterPro"/>
</dbReference>
<dbReference type="GO" id="GO:0075732">
    <property type="term" value="P:viral penetration into host nucleus"/>
    <property type="evidence" value="ECO:0007669"/>
    <property type="project" value="UniProtKB-KW"/>
</dbReference>
<dbReference type="HAMAP" id="MF_04025">
    <property type="entry name" value="HSV_CVC2"/>
    <property type="match status" value="1"/>
</dbReference>
<dbReference type="InterPro" id="IPR002493">
    <property type="entry name" value="Herpes_UL25"/>
</dbReference>
<dbReference type="Pfam" id="PF01499">
    <property type="entry name" value="Herpes_UL25"/>
    <property type="match status" value="1"/>
</dbReference>
<keyword id="KW-0167">Capsid protein</keyword>
<keyword id="KW-1048">Host nucleus</keyword>
<keyword id="KW-0945">Host-virus interaction</keyword>
<keyword id="KW-1185">Reference proteome</keyword>
<keyword id="KW-0231">Viral genome packaging</keyword>
<keyword id="KW-1163">Viral penetration into host nucleus</keyword>
<keyword id="KW-1188">Viral release from host cell</keyword>
<keyword id="KW-0946">Virion</keyword>
<keyword id="KW-1160">Virus entry into host cell</keyword>
<evidence type="ECO:0000255" key="1">
    <source>
        <dbReference type="HAMAP-Rule" id="MF_04025"/>
    </source>
</evidence>
<name>CVC2_HHV7J</name>
<feature type="chain" id="PRO_0000116000" description="Capsid vertex component 2">
    <location>
        <begin position="1"/>
        <end position="554"/>
    </location>
</feature>
<feature type="region of interest" description="Interaction with major capsid protein/MCP" evidence="1">
    <location>
        <begin position="1"/>
        <end position="46"/>
    </location>
</feature>
<gene>
    <name evidence="1" type="primary">CVC2</name>
    <name type="ordered locus">U50</name>
</gene>
<sequence length="554" mass="63940">MTQLSLFYQFPIQPIFEGHVRNTLICTEEDMQQLQNLGIRKLRKEKEEIQKNKILKNLLKTELDVLQAHVQTECQKLNTNLRDIENALLLENQKIIPSSETHSVLEESLQAKTVTQVTITQIDPAIHFTENFRPEMIKTFYNNTQMWSYTFGAWFYKLKRAFFTDSKLKRMLKLTYVDSLSITQELLSISINALEQITIYPMHDNLVSDLEAGLCLLTAFFASYPGTFLTENIKFVDVIQNLSQIFRYLNTEILATKNASPQDFYFGFNDPDKMKYFIPLCKGRHYAINTFSNHILIKIFIKKGVIKQVPGDQMSKGHVVIESKLTGTLTDDKLLYWTQILLQPKLGKEVPIFVHQQQYLRSGIVAIESLYLLWQILNSESIFGKRTGKFYLTTIFPHVNAEDVTETEFSSVNIQNFEFLMKNYVVPTYLANNESTISTLFPGLISIVVNESVRLGWDHNQNTLTQTNALHSQTKDNPFVEYIRSQLEETAELAVLEKHDKILFHFENGLNVTLSLALPRHRLFAMASSLFNVADLYDFLYFLVLGFIPVATVI</sequence>
<organismHost>
    <name type="scientific">Homo sapiens</name>
    <name type="common">Human</name>
    <dbReference type="NCBI Taxonomy" id="9606"/>
</organismHost>
<protein>
    <recommendedName>
        <fullName evidence="1">Capsid vertex component 2</fullName>
    </recommendedName>
</protein>
<proteinExistence type="inferred from homology"/>